<proteinExistence type="uncertain"/>
<dbReference type="EMBL" id="AL121897">
    <property type="status" value="NOT_ANNOTATED_CDS"/>
    <property type="molecule type" value="Genomic_DNA"/>
</dbReference>
<dbReference type="EMBL" id="BC101556">
    <property type="status" value="NOT_ANNOTATED_CDS"/>
    <property type="molecule type" value="mRNA"/>
</dbReference>
<dbReference type="EMBL" id="BC101558">
    <property type="status" value="NOT_ANNOTATED_CDS"/>
    <property type="molecule type" value="mRNA"/>
</dbReference>
<dbReference type="SMR" id="Q9H489"/>
<dbReference type="FunCoup" id="Q9H489">
    <property type="interactions" value="66"/>
</dbReference>
<dbReference type="BioMuta" id="HGNC:16256"/>
<dbReference type="DMDM" id="34098714"/>
<dbReference type="MassIVE" id="Q9H489"/>
<dbReference type="ProteomicsDB" id="80795"/>
<dbReference type="AGR" id="HGNC:16256"/>
<dbReference type="GeneCards" id="TSPY26P"/>
<dbReference type="HGNC" id="HGNC:16256">
    <property type="gene designation" value="TSPY26P"/>
</dbReference>
<dbReference type="neXtProt" id="NX_Q9H489"/>
<dbReference type="GeneTree" id="ENSGT00940000165373"/>
<dbReference type="InParanoid" id="Q9H489"/>
<dbReference type="PAN-GO" id="Q9H489">
    <property type="GO annotations" value="4 GO annotations based on evolutionary models"/>
</dbReference>
<dbReference type="PhylomeDB" id="Q9H489"/>
<dbReference type="PathwayCommons" id="Q9H489"/>
<dbReference type="Pharos" id="Q9H489">
    <property type="development level" value="Tdark"/>
</dbReference>
<dbReference type="PRO" id="PR:Q9H489"/>
<dbReference type="Proteomes" id="UP000005640">
    <property type="component" value="Unplaced"/>
</dbReference>
<dbReference type="RNAct" id="Q9H489">
    <property type="molecule type" value="protein"/>
</dbReference>
<dbReference type="GO" id="GO:0000785">
    <property type="term" value="C:chromatin"/>
    <property type="evidence" value="ECO:0000318"/>
    <property type="project" value="GO_Central"/>
</dbReference>
<dbReference type="GO" id="GO:0005634">
    <property type="term" value="C:nucleus"/>
    <property type="evidence" value="ECO:0000318"/>
    <property type="project" value="GO_Central"/>
</dbReference>
<dbReference type="GO" id="GO:0003682">
    <property type="term" value="F:chromatin binding"/>
    <property type="evidence" value="ECO:0000318"/>
    <property type="project" value="GO_Central"/>
</dbReference>
<dbReference type="GO" id="GO:0042393">
    <property type="term" value="F:histone binding"/>
    <property type="evidence" value="ECO:0000318"/>
    <property type="project" value="GO_Central"/>
</dbReference>
<dbReference type="GO" id="GO:0006334">
    <property type="term" value="P:nucleosome assembly"/>
    <property type="evidence" value="ECO:0007669"/>
    <property type="project" value="InterPro"/>
</dbReference>
<dbReference type="FunFam" id="3.30.1120.90:FF:000002">
    <property type="entry name" value="Testis-specific Y-encoded-like protein 2"/>
    <property type="match status" value="1"/>
</dbReference>
<dbReference type="Gene3D" id="1.20.5.1500">
    <property type="match status" value="1"/>
</dbReference>
<dbReference type="Gene3D" id="3.30.1120.90">
    <property type="entry name" value="Nucleosome assembly protein"/>
    <property type="match status" value="1"/>
</dbReference>
<dbReference type="InterPro" id="IPR037231">
    <property type="entry name" value="NAP-like_sf"/>
</dbReference>
<dbReference type="InterPro" id="IPR002164">
    <property type="entry name" value="NAP_family"/>
</dbReference>
<dbReference type="PANTHER" id="PTHR11875">
    <property type="entry name" value="TESTIS-SPECIFIC Y-ENCODED PROTEIN"/>
    <property type="match status" value="1"/>
</dbReference>
<dbReference type="Pfam" id="PF00956">
    <property type="entry name" value="NAP"/>
    <property type="match status" value="1"/>
</dbReference>
<dbReference type="SUPFAM" id="SSF143113">
    <property type="entry name" value="NAP-like"/>
    <property type="match status" value="1"/>
</dbReference>
<gene>
    <name type="primary">TSPY26P</name>
    <name type="synonym">TSPYL3</name>
</gene>
<protein>
    <recommendedName>
        <fullName>Putative testis-specific Y-encoded-like protein 3</fullName>
        <shortName>TSPY-like protein 3</shortName>
    </recommendedName>
    <alternativeName>
        <fullName>Testis-specific Y-encoded protein 26 pseudogene</fullName>
    </alternativeName>
</protein>
<organism>
    <name type="scientific">Homo sapiens</name>
    <name type="common">Human</name>
    <dbReference type="NCBI Taxonomy" id="9606"/>
    <lineage>
        <taxon>Eukaryota</taxon>
        <taxon>Metazoa</taxon>
        <taxon>Chordata</taxon>
        <taxon>Craniata</taxon>
        <taxon>Vertebrata</taxon>
        <taxon>Euteleostomi</taxon>
        <taxon>Mammalia</taxon>
        <taxon>Eutheria</taxon>
        <taxon>Euarchontoglires</taxon>
        <taxon>Primates</taxon>
        <taxon>Haplorrhini</taxon>
        <taxon>Catarrhini</taxon>
        <taxon>Hominidae</taxon>
        <taxon>Homo</taxon>
    </lineage>
</organism>
<sequence>MADKRAGTPEAAARPPPGLAREGDARTVPAARAREAGGRGSLHPAAGPGTAFPSPGRGEAASTATTPSLENGRVRDEAPETCGAEGLGTRAGASEKAEDANKEEGAIFKKEPAEEVEKQQEGEEKQEVAAEAQEGPRLLNLGALIVDPLEAIQWEAEAVSAQADRAYLPLERRFGRMHRLYLARRSFIIQNIPGFWVTAFLNHPQLSAMISPRDEDMLCYLMNLEVRELRHSRTGCKFKFRFWSNPYFQNKVIVKEYECRASGRVVSIATRIRWHWGQEPPALVHRNRDTVRSFFSWFSQHSLPEADRVAQIIKDDLWPNPLQYYLLGDRPCRARGGLARWPTETPSRPYGFQSG</sequence>
<name>TSY26_HUMAN</name>
<evidence type="ECO:0000256" key="1">
    <source>
        <dbReference type="SAM" id="MobiDB-lite"/>
    </source>
</evidence>
<evidence type="ECO:0000269" key="2">
    <source>
    </source>
</evidence>
<evidence type="ECO:0000305" key="3"/>
<comment type="similarity">
    <text evidence="3">Belongs to the nucleosome assembly protein (NAP) family.</text>
</comment>
<comment type="caution">
    <text evidence="3">Could be the product of a pseudogene.</text>
</comment>
<reference key="1">
    <citation type="journal article" date="2001" name="Nature">
        <title>The DNA sequence and comparative analysis of human chromosome 20.</title>
        <authorList>
            <person name="Deloukas P."/>
            <person name="Matthews L.H."/>
            <person name="Ashurst J.L."/>
            <person name="Burton J."/>
            <person name="Gilbert J.G.R."/>
            <person name="Jones M."/>
            <person name="Stavrides G."/>
            <person name="Almeida J.P."/>
            <person name="Babbage A.K."/>
            <person name="Bagguley C.L."/>
            <person name="Bailey J."/>
            <person name="Barlow K.F."/>
            <person name="Bates K.N."/>
            <person name="Beard L.M."/>
            <person name="Beare D.M."/>
            <person name="Beasley O.P."/>
            <person name="Bird C.P."/>
            <person name="Blakey S.E."/>
            <person name="Bridgeman A.M."/>
            <person name="Brown A.J."/>
            <person name="Buck D."/>
            <person name="Burrill W.D."/>
            <person name="Butler A.P."/>
            <person name="Carder C."/>
            <person name="Carter N.P."/>
            <person name="Chapman J.C."/>
            <person name="Clamp M."/>
            <person name="Clark G."/>
            <person name="Clark L.N."/>
            <person name="Clark S.Y."/>
            <person name="Clee C.M."/>
            <person name="Clegg S."/>
            <person name="Cobley V.E."/>
            <person name="Collier R.E."/>
            <person name="Connor R.E."/>
            <person name="Corby N.R."/>
            <person name="Coulson A."/>
            <person name="Coville G.J."/>
            <person name="Deadman R."/>
            <person name="Dhami P.D."/>
            <person name="Dunn M."/>
            <person name="Ellington A.G."/>
            <person name="Frankland J.A."/>
            <person name="Fraser A."/>
            <person name="French L."/>
            <person name="Garner P."/>
            <person name="Grafham D.V."/>
            <person name="Griffiths C."/>
            <person name="Griffiths M.N.D."/>
            <person name="Gwilliam R."/>
            <person name="Hall R.E."/>
            <person name="Hammond S."/>
            <person name="Harley J.L."/>
            <person name="Heath P.D."/>
            <person name="Ho S."/>
            <person name="Holden J.L."/>
            <person name="Howden P.J."/>
            <person name="Huckle E."/>
            <person name="Hunt A.R."/>
            <person name="Hunt S.E."/>
            <person name="Jekosch K."/>
            <person name="Johnson C.M."/>
            <person name="Johnson D."/>
            <person name="Kay M.P."/>
            <person name="Kimberley A.M."/>
            <person name="King A."/>
            <person name="Knights A."/>
            <person name="Laird G.K."/>
            <person name="Lawlor S."/>
            <person name="Lehvaeslaiho M.H."/>
            <person name="Leversha M.A."/>
            <person name="Lloyd C."/>
            <person name="Lloyd D.M."/>
            <person name="Lovell J.D."/>
            <person name="Marsh V.L."/>
            <person name="Martin S.L."/>
            <person name="McConnachie L.J."/>
            <person name="McLay K."/>
            <person name="McMurray A.A."/>
            <person name="Milne S.A."/>
            <person name="Mistry D."/>
            <person name="Moore M.J.F."/>
            <person name="Mullikin J.C."/>
            <person name="Nickerson T."/>
            <person name="Oliver K."/>
            <person name="Parker A."/>
            <person name="Patel R."/>
            <person name="Pearce T.A.V."/>
            <person name="Peck A.I."/>
            <person name="Phillimore B.J.C.T."/>
            <person name="Prathalingam S.R."/>
            <person name="Plumb R.W."/>
            <person name="Ramsay H."/>
            <person name="Rice C.M."/>
            <person name="Ross M.T."/>
            <person name="Scott C.E."/>
            <person name="Sehra H.K."/>
            <person name="Shownkeen R."/>
            <person name="Sims S."/>
            <person name="Skuce C.D."/>
            <person name="Smith M.L."/>
            <person name="Soderlund C."/>
            <person name="Steward C.A."/>
            <person name="Sulston J.E."/>
            <person name="Swann R.M."/>
            <person name="Sycamore N."/>
            <person name="Taylor R."/>
            <person name="Tee L."/>
            <person name="Thomas D.W."/>
            <person name="Thorpe A."/>
            <person name="Tracey A."/>
            <person name="Tromans A.C."/>
            <person name="Vaudin M."/>
            <person name="Wall M."/>
            <person name="Wallis J.M."/>
            <person name="Whitehead S.L."/>
            <person name="Whittaker P."/>
            <person name="Willey D.L."/>
            <person name="Williams L."/>
            <person name="Williams S.A."/>
            <person name="Wilming L."/>
            <person name="Wray P.W."/>
            <person name="Hubbard T."/>
            <person name="Durbin R.M."/>
            <person name="Bentley D.R."/>
            <person name="Beck S."/>
            <person name="Rogers J."/>
        </authorList>
    </citation>
    <scope>NUCLEOTIDE SEQUENCE [LARGE SCALE GENOMIC DNA]</scope>
</reference>
<reference key="2">
    <citation type="journal article" date="2004" name="Genome Res.">
        <title>The status, quality, and expansion of the NIH full-length cDNA project: the Mammalian Gene Collection (MGC).</title>
        <authorList>
            <consortium name="The MGC Project Team"/>
        </authorList>
    </citation>
    <scope>NUCLEOTIDE SEQUENCE [LARGE SCALE MRNA]</scope>
    <scope>VARIANT HIS-246</scope>
</reference>
<keyword id="KW-1267">Proteomics identification</keyword>
<keyword id="KW-1185">Reference proteome</keyword>
<feature type="chain" id="PRO_0000185672" description="Putative testis-specific Y-encoded-like protein 3">
    <location>
        <begin position="1"/>
        <end position="355"/>
    </location>
</feature>
<feature type="region of interest" description="Disordered" evidence="1">
    <location>
        <begin position="1"/>
        <end position="131"/>
    </location>
</feature>
<feature type="compositionally biased region" description="Basic and acidic residues" evidence="1">
    <location>
        <begin position="93"/>
        <end position="128"/>
    </location>
</feature>
<feature type="sequence variant" id="VAR_020256" description="In dbSNP:rs3813922." evidence="2">
    <original>P</original>
    <variation>H</variation>
    <location>
        <position position="246"/>
    </location>
</feature>
<accession>Q9H489</accession>
<accession>Q3MJ63</accession>
<accession>Q3MJ65</accession>